<feature type="chain" id="PRO_0000134909" description="Molybdenum cofactor guanylyltransferase">
    <location>
        <begin position="1"/>
        <end position="194"/>
    </location>
</feature>
<feature type="binding site" evidence="1">
    <location>
        <begin position="12"/>
        <end position="14"/>
    </location>
    <ligand>
        <name>GTP</name>
        <dbReference type="ChEBI" id="CHEBI:37565"/>
    </ligand>
</feature>
<feature type="binding site" evidence="1">
    <location>
        <position position="25"/>
    </location>
    <ligand>
        <name>GTP</name>
        <dbReference type="ChEBI" id="CHEBI:37565"/>
    </ligand>
</feature>
<feature type="binding site" evidence="1">
    <location>
        <position position="71"/>
    </location>
    <ligand>
        <name>GTP</name>
        <dbReference type="ChEBI" id="CHEBI:37565"/>
    </ligand>
</feature>
<feature type="binding site" evidence="1">
    <location>
        <position position="101"/>
    </location>
    <ligand>
        <name>GTP</name>
        <dbReference type="ChEBI" id="CHEBI:37565"/>
    </ligand>
</feature>
<feature type="binding site" evidence="1">
    <location>
        <position position="101"/>
    </location>
    <ligand>
        <name>Mg(2+)</name>
        <dbReference type="ChEBI" id="CHEBI:18420"/>
    </ligand>
</feature>
<accession>Q8ZKU9</accession>
<organism>
    <name type="scientific">Salmonella typhimurium (strain LT2 / SGSC1412 / ATCC 700720)</name>
    <dbReference type="NCBI Taxonomy" id="99287"/>
    <lineage>
        <taxon>Bacteria</taxon>
        <taxon>Pseudomonadati</taxon>
        <taxon>Pseudomonadota</taxon>
        <taxon>Gammaproteobacteria</taxon>
        <taxon>Enterobacterales</taxon>
        <taxon>Enterobacteriaceae</taxon>
        <taxon>Salmonella</taxon>
    </lineage>
</organism>
<proteinExistence type="inferred from homology"/>
<sequence length="194" mass="21189">MNLDEVITGVVLAGGKARRMGGADKGLLELGGKPLWRHVADALAPQLATVVISANRHLDIYQASGLKVIPDSIADFPGPLAGMLSVFQQVAGDWFLFCPCDNPCIPHNLVDRLAAQRHGAPVVWVHDGERDHPTIALINRAVEPQLTAYLQAGERRVMIFMRQVGGHAVDFSDCKEAFVNVNTPEELAQWQKRP</sequence>
<reference key="1">
    <citation type="journal article" date="2001" name="Nature">
        <title>Complete genome sequence of Salmonella enterica serovar Typhimurium LT2.</title>
        <authorList>
            <person name="McClelland M."/>
            <person name="Sanderson K.E."/>
            <person name="Spieth J."/>
            <person name="Clifton S.W."/>
            <person name="Latreille P."/>
            <person name="Courtney L."/>
            <person name="Porwollik S."/>
            <person name="Ali J."/>
            <person name="Dante M."/>
            <person name="Du F."/>
            <person name="Hou S."/>
            <person name="Layman D."/>
            <person name="Leonard S."/>
            <person name="Nguyen C."/>
            <person name="Scott K."/>
            <person name="Holmes A."/>
            <person name="Grewal N."/>
            <person name="Mulvaney E."/>
            <person name="Ryan E."/>
            <person name="Sun H."/>
            <person name="Florea L."/>
            <person name="Miller W."/>
            <person name="Stoneking T."/>
            <person name="Nhan M."/>
            <person name="Waterston R."/>
            <person name="Wilson R.K."/>
        </authorList>
    </citation>
    <scope>NUCLEOTIDE SEQUENCE [LARGE SCALE GENOMIC DNA]</scope>
    <source>
        <strain>LT2 / SGSC1412 / ATCC 700720</strain>
    </source>
</reference>
<comment type="function">
    <text evidence="1">Transfers a GMP moiety from GTP to Mo-molybdopterin (Mo-MPT) cofactor (Moco or molybdenum cofactor) to form Mo-molybdopterin guanine dinucleotide (Mo-MGD) cofactor.</text>
</comment>
<comment type="catalytic activity">
    <reaction evidence="1">
        <text>Mo-molybdopterin + GTP + H(+) = Mo-molybdopterin guanine dinucleotide + diphosphate</text>
        <dbReference type="Rhea" id="RHEA:34243"/>
        <dbReference type="ChEBI" id="CHEBI:15378"/>
        <dbReference type="ChEBI" id="CHEBI:33019"/>
        <dbReference type="ChEBI" id="CHEBI:37565"/>
        <dbReference type="ChEBI" id="CHEBI:71302"/>
        <dbReference type="ChEBI" id="CHEBI:71310"/>
        <dbReference type="EC" id="2.7.7.77"/>
    </reaction>
</comment>
<comment type="cofactor">
    <cofactor evidence="1">
        <name>Mg(2+)</name>
        <dbReference type="ChEBI" id="CHEBI:18420"/>
    </cofactor>
</comment>
<comment type="subunit">
    <text evidence="1">Monomer.</text>
</comment>
<comment type="subcellular location">
    <subcellularLocation>
        <location evidence="1">Cytoplasm</location>
    </subcellularLocation>
</comment>
<comment type="domain">
    <text evidence="1">The N-terminal domain determines nucleotide recognition and specific binding, while the C-terminal domain determines the specific binding to the target protein.</text>
</comment>
<comment type="similarity">
    <text evidence="1">Belongs to the MobA family.</text>
</comment>
<gene>
    <name evidence="1" type="primary">mobA</name>
    <name type="ordered locus">STM3994</name>
</gene>
<evidence type="ECO:0000255" key="1">
    <source>
        <dbReference type="HAMAP-Rule" id="MF_00316"/>
    </source>
</evidence>
<dbReference type="EC" id="2.7.7.77" evidence="1"/>
<dbReference type="EMBL" id="AE006468">
    <property type="protein sequence ID" value="AAL22833.1"/>
    <property type="molecule type" value="Genomic_DNA"/>
</dbReference>
<dbReference type="RefSeq" id="NP_462874.1">
    <property type="nucleotide sequence ID" value="NC_003197.2"/>
</dbReference>
<dbReference type="RefSeq" id="WP_001046887.1">
    <property type="nucleotide sequence ID" value="NC_003197.2"/>
</dbReference>
<dbReference type="SMR" id="Q8ZKU9"/>
<dbReference type="STRING" id="99287.STM3994"/>
<dbReference type="PaxDb" id="99287-STM3994"/>
<dbReference type="GeneID" id="1255520"/>
<dbReference type="KEGG" id="stm:STM3994"/>
<dbReference type="PATRIC" id="fig|99287.12.peg.4208"/>
<dbReference type="HOGENOM" id="CLU_055597_5_1_6"/>
<dbReference type="OMA" id="IDFWYAK"/>
<dbReference type="PhylomeDB" id="Q8ZKU9"/>
<dbReference type="BioCyc" id="SENT99287:STM3994-MONOMER"/>
<dbReference type="Proteomes" id="UP000001014">
    <property type="component" value="Chromosome"/>
</dbReference>
<dbReference type="GO" id="GO:0005737">
    <property type="term" value="C:cytoplasm"/>
    <property type="evidence" value="ECO:0007669"/>
    <property type="project" value="UniProtKB-SubCell"/>
</dbReference>
<dbReference type="GO" id="GO:0005525">
    <property type="term" value="F:GTP binding"/>
    <property type="evidence" value="ECO:0007669"/>
    <property type="project" value="UniProtKB-UniRule"/>
</dbReference>
<dbReference type="GO" id="GO:0046872">
    <property type="term" value="F:metal ion binding"/>
    <property type="evidence" value="ECO:0007669"/>
    <property type="project" value="UniProtKB-KW"/>
</dbReference>
<dbReference type="GO" id="GO:0061603">
    <property type="term" value="F:molybdenum cofactor guanylyltransferase activity"/>
    <property type="evidence" value="ECO:0007669"/>
    <property type="project" value="UniProtKB-EC"/>
</dbReference>
<dbReference type="GO" id="GO:0016779">
    <property type="term" value="F:nucleotidyltransferase activity"/>
    <property type="evidence" value="ECO:0000318"/>
    <property type="project" value="GO_Central"/>
</dbReference>
<dbReference type="GO" id="GO:1902758">
    <property type="term" value="P:bis(molybdopterin guanine dinucleotide)molybdenum biosynthetic process"/>
    <property type="evidence" value="ECO:0000318"/>
    <property type="project" value="GO_Central"/>
</dbReference>
<dbReference type="CDD" id="cd02503">
    <property type="entry name" value="MobA"/>
    <property type="match status" value="1"/>
</dbReference>
<dbReference type="Gene3D" id="3.90.550.10">
    <property type="entry name" value="Spore Coat Polysaccharide Biosynthesis Protein SpsA, Chain A"/>
    <property type="match status" value="1"/>
</dbReference>
<dbReference type="HAMAP" id="MF_00316">
    <property type="entry name" value="MobA"/>
    <property type="match status" value="1"/>
</dbReference>
<dbReference type="InterPro" id="IPR025877">
    <property type="entry name" value="MobA-like_NTP_Trfase"/>
</dbReference>
<dbReference type="InterPro" id="IPR013482">
    <property type="entry name" value="Molybde_CF_guanTrfase"/>
</dbReference>
<dbReference type="InterPro" id="IPR029044">
    <property type="entry name" value="Nucleotide-diphossugar_trans"/>
</dbReference>
<dbReference type="NCBIfam" id="TIGR02665">
    <property type="entry name" value="molyb_mobA"/>
    <property type="match status" value="1"/>
</dbReference>
<dbReference type="PANTHER" id="PTHR19136">
    <property type="entry name" value="MOLYBDENUM COFACTOR GUANYLYLTRANSFERASE"/>
    <property type="match status" value="1"/>
</dbReference>
<dbReference type="PANTHER" id="PTHR19136:SF81">
    <property type="entry name" value="MOLYBDENUM COFACTOR GUANYLYLTRANSFERASE"/>
    <property type="match status" value="1"/>
</dbReference>
<dbReference type="Pfam" id="PF12804">
    <property type="entry name" value="NTP_transf_3"/>
    <property type="match status" value="1"/>
</dbReference>
<dbReference type="SUPFAM" id="SSF53448">
    <property type="entry name" value="Nucleotide-diphospho-sugar transferases"/>
    <property type="match status" value="1"/>
</dbReference>
<keyword id="KW-0963">Cytoplasm</keyword>
<keyword id="KW-0342">GTP-binding</keyword>
<keyword id="KW-0460">Magnesium</keyword>
<keyword id="KW-0479">Metal-binding</keyword>
<keyword id="KW-0501">Molybdenum cofactor biosynthesis</keyword>
<keyword id="KW-0547">Nucleotide-binding</keyword>
<keyword id="KW-1185">Reference proteome</keyword>
<keyword id="KW-0808">Transferase</keyword>
<protein>
    <recommendedName>
        <fullName evidence="1">Molybdenum cofactor guanylyltransferase</fullName>
        <shortName evidence="1">MoCo guanylyltransferase</shortName>
        <ecNumber evidence="1">2.7.7.77</ecNumber>
    </recommendedName>
    <alternativeName>
        <fullName evidence="1">GTP:molybdopterin guanylyltransferase</fullName>
    </alternativeName>
    <alternativeName>
        <fullName evidence="1">Mo-MPT guanylyltransferase</fullName>
    </alternativeName>
    <alternativeName>
        <fullName evidence="1">Molybdopterin guanylyltransferase</fullName>
    </alternativeName>
    <alternativeName>
        <fullName evidence="1">Molybdopterin-guanine dinucleotide synthase</fullName>
        <shortName evidence="1">MGD synthase</shortName>
    </alternativeName>
</protein>
<name>MOBA_SALTY</name>